<feature type="chain" id="PRO_0000046167" description="Cation-transporting P-type ATPase B">
    <location>
        <begin position="1"/>
        <end position="750"/>
    </location>
</feature>
<feature type="transmembrane region" description="Helical" evidence="1">
    <location>
        <begin position="104"/>
        <end position="124"/>
    </location>
</feature>
<feature type="transmembrane region" description="Helical" evidence="1">
    <location>
        <begin position="129"/>
        <end position="149"/>
    </location>
</feature>
<feature type="transmembrane region" description="Helical" evidence="1">
    <location>
        <begin position="167"/>
        <end position="187"/>
    </location>
</feature>
<feature type="transmembrane region" description="Helical" evidence="1">
    <location>
        <begin position="200"/>
        <end position="220"/>
    </location>
</feature>
<feature type="transmembrane region" description="Helical" evidence="1">
    <location>
        <begin position="360"/>
        <end position="380"/>
    </location>
</feature>
<feature type="transmembrane region" description="Helical" evidence="1">
    <location>
        <begin position="389"/>
        <end position="409"/>
    </location>
</feature>
<feature type="transmembrane region" description="Helical" evidence="1">
    <location>
        <begin position="471"/>
        <end position="491"/>
    </location>
</feature>
<feature type="transmembrane region" description="Helical" evidence="1">
    <location>
        <begin position="500"/>
        <end position="520"/>
    </location>
</feature>
<feature type="transmembrane region" description="Helical" evidence="1">
    <location>
        <begin position="547"/>
        <end position="567"/>
    </location>
</feature>
<feature type="transmembrane region" description="Helical" evidence="1">
    <location>
        <begin position="663"/>
        <end position="683"/>
    </location>
</feature>
<feature type="transmembrane region" description="Helical" evidence="1">
    <location>
        <begin position="693"/>
        <end position="713"/>
    </location>
</feature>
<feature type="transmembrane region" description="Helical" evidence="1">
    <location>
        <begin position="715"/>
        <end position="735"/>
    </location>
</feature>
<feature type="domain" description="HMA" evidence="2">
    <location>
        <begin position="17"/>
        <end position="80"/>
    </location>
</feature>
<feature type="active site" description="4-aspartylphosphate intermediate" evidence="3">
    <location>
        <position position="445"/>
    </location>
</feature>
<feature type="binding site" evidence="2">
    <location>
        <position position="28"/>
    </location>
    <ligand>
        <name>a metal cation</name>
        <dbReference type="ChEBI" id="CHEBI:25213"/>
    </ligand>
</feature>
<feature type="binding site" evidence="2">
    <location>
        <position position="31"/>
    </location>
    <ligand>
        <name>a metal cation</name>
        <dbReference type="ChEBI" id="CHEBI:25213"/>
    </ligand>
</feature>
<feature type="sequence conflict" description="In Ref. 1; CAA86363." evidence="3" ref="1">
    <original>EGESR</original>
    <variation>RRRIT</variation>
    <location>
        <begin position="544"/>
        <end position="548"/>
    </location>
</feature>
<reference key="1">
    <citation type="journal article" date="1995" name="Mol. Microbiol.">
        <title>The Mycobacterium leprae genome: systematic sequence analysis identifies key catabolic enzymes, ATP-dependent transport systems and a novel polA locus associated with genomic variability.</title>
        <authorList>
            <person name="Fsihi H."/>
            <person name="Cole S.T."/>
        </authorList>
    </citation>
    <scope>NUCLEOTIDE SEQUENCE [GENOMIC DNA]</scope>
</reference>
<reference key="2">
    <citation type="journal article" date="2001" name="Nature">
        <title>Massive gene decay in the leprosy bacillus.</title>
        <authorList>
            <person name="Cole S.T."/>
            <person name="Eiglmeier K."/>
            <person name="Parkhill J."/>
            <person name="James K.D."/>
            <person name="Thomson N.R."/>
            <person name="Wheeler P.R."/>
            <person name="Honore N."/>
            <person name="Garnier T."/>
            <person name="Churcher C.M."/>
            <person name="Harris D.E."/>
            <person name="Mungall K.L."/>
            <person name="Basham D."/>
            <person name="Brown D."/>
            <person name="Chillingworth T."/>
            <person name="Connor R."/>
            <person name="Davies R.M."/>
            <person name="Devlin K."/>
            <person name="Duthoy S."/>
            <person name="Feltwell T."/>
            <person name="Fraser A."/>
            <person name="Hamlin N."/>
            <person name="Holroyd S."/>
            <person name="Hornsby T."/>
            <person name="Jagels K."/>
            <person name="Lacroix C."/>
            <person name="Maclean J."/>
            <person name="Moule S."/>
            <person name="Murphy L.D."/>
            <person name="Oliver K."/>
            <person name="Quail M.A."/>
            <person name="Rajandream M.A."/>
            <person name="Rutherford K.M."/>
            <person name="Rutter S."/>
            <person name="Seeger K."/>
            <person name="Simon S."/>
            <person name="Simmonds M."/>
            <person name="Skelton J."/>
            <person name="Squares R."/>
            <person name="Squares S."/>
            <person name="Stevens K."/>
            <person name="Taylor K."/>
            <person name="Whitehead S."/>
            <person name="Woodward J.R."/>
            <person name="Barrell B.G."/>
        </authorList>
    </citation>
    <scope>NUCLEOTIDE SEQUENCE [LARGE SCALE GENOMIC DNA]</scope>
    <source>
        <strain>TN</strain>
    </source>
</reference>
<gene>
    <name type="primary">ctpB</name>
    <name type="ordered locus">ML2000</name>
</gene>
<proteinExistence type="inferred from homology"/>
<dbReference type="EC" id="7.2.2.-"/>
<dbReference type="EMBL" id="Z46257">
    <property type="protein sequence ID" value="CAA86363.1"/>
    <property type="molecule type" value="Genomic_DNA"/>
</dbReference>
<dbReference type="EMBL" id="AL583924">
    <property type="protein sequence ID" value="CAC30955.1"/>
    <property type="molecule type" value="Genomic_DNA"/>
</dbReference>
<dbReference type="PIR" id="C87159">
    <property type="entry name" value="C87159"/>
</dbReference>
<dbReference type="PIR" id="S77653">
    <property type="entry name" value="S77653"/>
</dbReference>
<dbReference type="RefSeq" id="NP_302350.1">
    <property type="nucleotide sequence ID" value="NC_002677.1"/>
</dbReference>
<dbReference type="RefSeq" id="WP_010908670.1">
    <property type="nucleotide sequence ID" value="NC_002677.1"/>
</dbReference>
<dbReference type="SMR" id="P46840"/>
<dbReference type="STRING" id="272631.gene:17575852"/>
<dbReference type="KEGG" id="mle:ML2000"/>
<dbReference type="PATRIC" id="fig|272631.5.peg.3760"/>
<dbReference type="Leproma" id="ML2000"/>
<dbReference type="eggNOG" id="COG2217">
    <property type="taxonomic scope" value="Bacteria"/>
</dbReference>
<dbReference type="HOGENOM" id="CLU_001771_0_3_11"/>
<dbReference type="OrthoDB" id="7059309at2"/>
<dbReference type="Proteomes" id="UP000000806">
    <property type="component" value="Chromosome"/>
</dbReference>
<dbReference type="GO" id="GO:0005886">
    <property type="term" value="C:plasma membrane"/>
    <property type="evidence" value="ECO:0007669"/>
    <property type="project" value="UniProtKB-SubCell"/>
</dbReference>
<dbReference type="GO" id="GO:0005524">
    <property type="term" value="F:ATP binding"/>
    <property type="evidence" value="ECO:0007669"/>
    <property type="project" value="UniProtKB-KW"/>
</dbReference>
<dbReference type="GO" id="GO:0016887">
    <property type="term" value="F:ATP hydrolysis activity"/>
    <property type="evidence" value="ECO:0007669"/>
    <property type="project" value="InterPro"/>
</dbReference>
<dbReference type="GO" id="GO:0005507">
    <property type="term" value="F:copper ion binding"/>
    <property type="evidence" value="ECO:0007669"/>
    <property type="project" value="TreeGrafter"/>
</dbReference>
<dbReference type="GO" id="GO:0043682">
    <property type="term" value="F:P-type divalent copper transporter activity"/>
    <property type="evidence" value="ECO:0007669"/>
    <property type="project" value="TreeGrafter"/>
</dbReference>
<dbReference type="GO" id="GO:0055070">
    <property type="term" value="P:copper ion homeostasis"/>
    <property type="evidence" value="ECO:0007669"/>
    <property type="project" value="TreeGrafter"/>
</dbReference>
<dbReference type="CDD" id="cd00371">
    <property type="entry name" value="HMA"/>
    <property type="match status" value="1"/>
</dbReference>
<dbReference type="CDD" id="cd02094">
    <property type="entry name" value="P-type_ATPase_Cu-like"/>
    <property type="match status" value="1"/>
</dbReference>
<dbReference type="FunFam" id="3.30.70.100:FF:000005">
    <property type="entry name" value="Copper-exporting P-type ATPase A"/>
    <property type="match status" value="1"/>
</dbReference>
<dbReference type="FunFam" id="2.70.150.10:FF:000002">
    <property type="entry name" value="Copper-transporting ATPase 1, putative"/>
    <property type="match status" value="1"/>
</dbReference>
<dbReference type="Gene3D" id="3.30.70.100">
    <property type="match status" value="1"/>
</dbReference>
<dbReference type="Gene3D" id="3.40.1110.10">
    <property type="entry name" value="Calcium-transporting ATPase, cytoplasmic domain N"/>
    <property type="match status" value="1"/>
</dbReference>
<dbReference type="Gene3D" id="2.70.150.10">
    <property type="entry name" value="Calcium-transporting ATPase, cytoplasmic transduction domain A"/>
    <property type="match status" value="1"/>
</dbReference>
<dbReference type="Gene3D" id="3.40.50.1000">
    <property type="entry name" value="HAD superfamily/HAD-like"/>
    <property type="match status" value="1"/>
</dbReference>
<dbReference type="InterPro" id="IPR023299">
    <property type="entry name" value="ATPase_P-typ_cyto_dom_N"/>
</dbReference>
<dbReference type="InterPro" id="IPR018303">
    <property type="entry name" value="ATPase_P-typ_P_site"/>
</dbReference>
<dbReference type="InterPro" id="IPR023298">
    <property type="entry name" value="ATPase_P-typ_TM_dom_sf"/>
</dbReference>
<dbReference type="InterPro" id="IPR008250">
    <property type="entry name" value="ATPase_P-typ_transduc_dom_A_sf"/>
</dbReference>
<dbReference type="InterPro" id="IPR000579">
    <property type="entry name" value="Cation-trans_P-type_ATPase_A/B"/>
</dbReference>
<dbReference type="InterPro" id="IPR036412">
    <property type="entry name" value="HAD-like_sf"/>
</dbReference>
<dbReference type="InterPro" id="IPR023214">
    <property type="entry name" value="HAD_sf"/>
</dbReference>
<dbReference type="InterPro" id="IPR017969">
    <property type="entry name" value="Heavy-metal-associated_CS"/>
</dbReference>
<dbReference type="InterPro" id="IPR006121">
    <property type="entry name" value="HMA_dom"/>
</dbReference>
<dbReference type="InterPro" id="IPR036163">
    <property type="entry name" value="HMA_dom_sf"/>
</dbReference>
<dbReference type="InterPro" id="IPR027256">
    <property type="entry name" value="P-typ_ATPase_IB"/>
</dbReference>
<dbReference type="InterPro" id="IPR001757">
    <property type="entry name" value="P_typ_ATPase"/>
</dbReference>
<dbReference type="InterPro" id="IPR044492">
    <property type="entry name" value="P_typ_ATPase_HD_dom"/>
</dbReference>
<dbReference type="NCBIfam" id="TIGR01511">
    <property type="entry name" value="ATPase-IB1_Cu"/>
    <property type="match status" value="1"/>
</dbReference>
<dbReference type="NCBIfam" id="TIGR01525">
    <property type="entry name" value="ATPase-IB_hvy"/>
    <property type="match status" value="1"/>
</dbReference>
<dbReference type="NCBIfam" id="TIGR01494">
    <property type="entry name" value="ATPase_P-type"/>
    <property type="match status" value="1"/>
</dbReference>
<dbReference type="PANTHER" id="PTHR43520">
    <property type="entry name" value="ATP7, ISOFORM B"/>
    <property type="match status" value="1"/>
</dbReference>
<dbReference type="PANTHER" id="PTHR43520:SF8">
    <property type="entry name" value="P-TYPE CU(+) TRANSPORTER"/>
    <property type="match status" value="1"/>
</dbReference>
<dbReference type="Pfam" id="PF00122">
    <property type="entry name" value="E1-E2_ATPase"/>
    <property type="match status" value="1"/>
</dbReference>
<dbReference type="Pfam" id="PF00403">
    <property type="entry name" value="HMA"/>
    <property type="match status" value="1"/>
</dbReference>
<dbReference type="Pfam" id="PF00702">
    <property type="entry name" value="Hydrolase"/>
    <property type="match status" value="1"/>
</dbReference>
<dbReference type="PRINTS" id="PR00119">
    <property type="entry name" value="CATATPASE"/>
</dbReference>
<dbReference type="PRINTS" id="PR00940">
    <property type="entry name" value="CATPATPASEA"/>
</dbReference>
<dbReference type="SFLD" id="SFLDS00003">
    <property type="entry name" value="Haloacid_Dehalogenase"/>
    <property type="match status" value="1"/>
</dbReference>
<dbReference type="SFLD" id="SFLDF00027">
    <property type="entry name" value="p-type_atpase"/>
    <property type="match status" value="1"/>
</dbReference>
<dbReference type="SUPFAM" id="SSF81653">
    <property type="entry name" value="Calcium ATPase, transduction domain A"/>
    <property type="match status" value="1"/>
</dbReference>
<dbReference type="SUPFAM" id="SSF81665">
    <property type="entry name" value="Calcium ATPase, transmembrane domain M"/>
    <property type="match status" value="1"/>
</dbReference>
<dbReference type="SUPFAM" id="SSF56784">
    <property type="entry name" value="HAD-like"/>
    <property type="match status" value="1"/>
</dbReference>
<dbReference type="SUPFAM" id="SSF55008">
    <property type="entry name" value="HMA, heavy metal-associated domain"/>
    <property type="match status" value="1"/>
</dbReference>
<dbReference type="PROSITE" id="PS00154">
    <property type="entry name" value="ATPASE_E1_E2"/>
    <property type="match status" value="1"/>
</dbReference>
<dbReference type="PROSITE" id="PS01047">
    <property type="entry name" value="HMA_1"/>
    <property type="match status" value="1"/>
</dbReference>
<dbReference type="PROSITE" id="PS50846">
    <property type="entry name" value="HMA_2"/>
    <property type="match status" value="1"/>
</dbReference>
<evidence type="ECO:0000255" key="1"/>
<evidence type="ECO:0000255" key="2">
    <source>
        <dbReference type="PROSITE-ProRule" id="PRU00280"/>
    </source>
</evidence>
<evidence type="ECO:0000305" key="3"/>
<name>CTPB_MYCLE</name>
<comment type="catalytic activity">
    <reaction>
        <text>ATP + H2O = ADP + phosphate + H(+)</text>
        <dbReference type="Rhea" id="RHEA:13065"/>
        <dbReference type="ChEBI" id="CHEBI:15377"/>
        <dbReference type="ChEBI" id="CHEBI:15378"/>
        <dbReference type="ChEBI" id="CHEBI:30616"/>
        <dbReference type="ChEBI" id="CHEBI:43474"/>
        <dbReference type="ChEBI" id="CHEBI:456216"/>
    </reaction>
</comment>
<comment type="subcellular location">
    <subcellularLocation>
        <location>Cell membrane</location>
        <topology>Multi-pass membrane protein</topology>
    </subcellularLocation>
</comment>
<comment type="similarity">
    <text evidence="3">Belongs to the cation transport ATPase (P-type) (TC 3.A.3) family. Type IB subfamily.</text>
</comment>
<keyword id="KW-0067">ATP-binding</keyword>
<keyword id="KW-1003">Cell membrane</keyword>
<keyword id="KW-0460">Magnesium</keyword>
<keyword id="KW-0472">Membrane</keyword>
<keyword id="KW-0479">Metal-binding</keyword>
<keyword id="KW-0547">Nucleotide-binding</keyword>
<keyword id="KW-0597">Phosphoprotein</keyword>
<keyword id="KW-1185">Reference proteome</keyword>
<keyword id="KW-1278">Translocase</keyword>
<keyword id="KW-0812">Transmembrane</keyword>
<keyword id="KW-1133">Transmembrane helix</keyword>
<sequence>MTASLVEDTNNNHESVRRIQLDVAGMLCAACASRVETKLNKIPGVRASVNFATRVATIDAVDVAVDELRQVIEQAGYRATAHAESAVEEIDPDADYARNLLRRLIVAALLFVPLADLSTMFAIVPTNRFPGWGYLLTALAAPIVTWAAWPFHRVALRNARYRAASMETLISAGILAATGWSLSTIFVDKEPRQTHGIWQAILHSDSIYFEVAAGVTVFVLAGRFFEARAKSKAGSALRALAARGAKNVEVLLPNGAELTIPAGELKKQQHFLVRPGETITADGVVIDGTATIDMSAITGEARPVHASPASTVVGGTTVLDGRLVIEATAVGGDTQFAAMVRLVEDAQVQKARVQHLADRIAAVFVPMVFVIAGLAGASWLLAGASPDRAFSVVLGVLVIACPCTLGLATPTAMMVASGRGAQLGIFIKGYRALETINAIDTVVFDKTGTLTLGQLSVSTVTSTGGWCSGEVLALASAVEAASEHSVATAIVAAYADPRPVADFVAFAGCGVSGVVAEHHVKIGKPSWVTRNAPCDVVLESARREGESRGETVVFVSVDGVACGAVAIADTVKDSAADAISALCSRGLHTILLTGDNQAAARAVAAQVGIDTVIADMLPEAKVDVIQRLRDQGHTVAMVGDGINDGPALACADLGLAMGRGTDVAIGAADLILVRDSLGVVPVALDLARATMRTIRINMIWAFGYNVAAIPIASSGLLNPLIAGAAMAFSSFFVVSNSLRLSNFGLSQTSD</sequence>
<accession>P46840</accession>
<protein>
    <recommendedName>
        <fullName>Cation-transporting P-type ATPase B</fullName>
        <ecNumber>7.2.2.-</ecNumber>
    </recommendedName>
</protein>
<organism>
    <name type="scientific">Mycobacterium leprae (strain TN)</name>
    <dbReference type="NCBI Taxonomy" id="272631"/>
    <lineage>
        <taxon>Bacteria</taxon>
        <taxon>Bacillati</taxon>
        <taxon>Actinomycetota</taxon>
        <taxon>Actinomycetes</taxon>
        <taxon>Mycobacteriales</taxon>
        <taxon>Mycobacteriaceae</taxon>
        <taxon>Mycobacterium</taxon>
    </lineage>
</organism>